<feature type="chain" id="PRO_0000253493" description="DNA-binding protein inhibitor ID-2">
    <location>
        <begin position="1"/>
        <end position="134"/>
    </location>
</feature>
<feature type="domain" description="bHLH" evidence="5">
    <location>
        <begin position="23"/>
        <end position="75"/>
    </location>
</feature>
<feature type="short sequence motif" description="Nuclear export signal" evidence="1">
    <location>
        <begin position="106"/>
        <end position="115"/>
    </location>
</feature>
<feature type="modified residue" description="Phosphoserine" evidence="4">
    <location>
        <position position="14"/>
    </location>
</feature>
<feature type="modified residue" description="Phosphoserine" evidence="2">
    <location>
        <position position="25"/>
    </location>
</feature>
<gene>
    <name type="primary">ID2</name>
</gene>
<dbReference type="EMBL" id="DQ116788">
    <property type="protein sequence ID" value="AAZ94263.1"/>
    <property type="molecule type" value="mRNA"/>
</dbReference>
<dbReference type="RefSeq" id="NP_001033054.1">
    <property type="nucleotide sequence ID" value="NM_001037965.1"/>
</dbReference>
<dbReference type="SMR" id="Q2VIU1"/>
<dbReference type="FunCoup" id="Q2VIU1">
    <property type="interactions" value="313"/>
</dbReference>
<dbReference type="STRING" id="9823.ENSSSCP00000009215"/>
<dbReference type="PaxDb" id="9823-ENSSSCP00000009215"/>
<dbReference type="Ensembl" id="ENSSSCT00000009458.5">
    <property type="protein sequence ID" value="ENSSSCP00000009215.2"/>
    <property type="gene ID" value="ENSSSCG00000008645.5"/>
</dbReference>
<dbReference type="Ensembl" id="ENSSSCT00015043912.1">
    <property type="protein sequence ID" value="ENSSSCP00015017357.1"/>
    <property type="gene ID" value="ENSSSCG00015033054.1"/>
</dbReference>
<dbReference type="Ensembl" id="ENSSSCT00025027637.1">
    <property type="protein sequence ID" value="ENSSSCP00025011704.1"/>
    <property type="gene ID" value="ENSSSCG00025020348.1"/>
</dbReference>
<dbReference type="Ensembl" id="ENSSSCT00030072065.1">
    <property type="protein sequence ID" value="ENSSSCP00030032857.1"/>
    <property type="gene ID" value="ENSSSCG00030051714.1"/>
</dbReference>
<dbReference type="Ensembl" id="ENSSSCT00035005472.1">
    <property type="protein sequence ID" value="ENSSSCP00035001913.1"/>
    <property type="gene ID" value="ENSSSCG00035004371.1"/>
</dbReference>
<dbReference type="Ensembl" id="ENSSSCT00040024377.1">
    <property type="protein sequence ID" value="ENSSSCP00040010343.1"/>
    <property type="gene ID" value="ENSSSCG00040018027.1"/>
</dbReference>
<dbReference type="Ensembl" id="ENSSSCT00045037537.1">
    <property type="protein sequence ID" value="ENSSSCP00045026091.1"/>
    <property type="gene ID" value="ENSSSCG00045021986.1"/>
</dbReference>
<dbReference type="Ensembl" id="ENSSSCT00050021908.1">
    <property type="protein sequence ID" value="ENSSSCP00050009204.1"/>
    <property type="gene ID" value="ENSSSCG00050016097.1"/>
</dbReference>
<dbReference type="Ensembl" id="ENSSSCT00055031181.1">
    <property type="protein sequence ID" value="ENSSSCP00055024833.1"/>
    <property type="gene ID" value="ENSSSCG00055015822.1"/>
</dbReference>
<dbReference type="Ensembl" id="ENSSSCT00055031210.1">
    <property type="protein sequence ID" value="ENSSSCP00055024856.1"/>
    <property type="gene ID" value="ENSSSCG00055015822.1"/>
</dbReference>
<dbReference type="Ensembl" id="ENSSSCT00060083493.1">
    <property type="protein sequence ID" value="ENSSSCP00060036196.1"/>
    <property type="gene ID" value="ENSSSCG00060061165.1"/>
</dbReference>
<dbReference type="Ensembl" id="ENSSSCT00065070121.1">
    <property type="protein sequence ID" value="ENSSSCP00065030555.1"/>
    <property type="gene ID" value="ENSSSCG00065051194.1"/>
</dbReference>
<dbReference type="Ensembl" id="ENSSSCT00065070124.1">
    <property type="protein sequence ID" value="ENSSSCP00065030557.1"/>
    <property type="gene ID" value="ENSSSCG00065051194.1"/>
</dbReference>
<dbReference type="Ensembl" id="ENSSSCT00070033427.1">
    <property type="protein sequence ID" value="ENSSSCP00070027928.1"/>
    <property type="gene ID" value="ENSSSCG00070016975.1"/>
</dbReference>
<dbReference type="Ensembl" id="ENSSSCT00070033436.1">
    <property type="protein sequence ID" value="ENSSSCP00070027936.1"/>
    <property type="gene ID" value="ENSSSCG00070016975.1"/>
</dbReference>
<dbReference type="Ensembl" id="ENSSSCT00085047043">
    <property type="protein sequence ID" value="ENSSSCP00085032842"/>
    <property type="gene ID" value="ENSSSCG00085024522"/>
</dbReference>
<dbReference type="Ensembl" id="ENSSSCT00090043429">
    <property type="protein sequence ID" value="ENSSSCP00090027203"/>
    <property type="gene ID" value="ENSSSCG00090024466"/>
</dbReference>
<dbReference type="Ensembl" id="ENSSSCT00105000246">
    <property type="protein sequence ID" value="ENSSSCP00105000172"/>
    <property type="gene ID" value="ENSSSCG00105000132"/>
</dbReference>
<dbReference type="Ensembl" id="ENSSSCT00110003939">
    <property type="protein sequence ID" value="ENSSSCP00110003052"/>
    <property type="gene ID" value="ENSSSCG00110001907"/>
</dbReference>
<dbReference type="Ensembl" id="ENSSSCT00115018412">
    <property type="protein sequence ID" value="ENSSSCP00115017397"/>
    <property type="gene ID" value="ENSSSCG00115010691"/>
</dbReference>
<dbReference type="Ensembl" id="ENSSSCT00130004584">
    <property type="protein sequence ID" value="ENSSSCP00130003242"/>
    <property type="gene ID" value="ENSSSCG00130002371"/>
</dbReference>
<dbReference type="GeneID" id="654298"/>
<dbReference type="KEGG" id="ssc:654298"/>
<dbReference type="CTD" id="3398"/>
<dbReference type="VGNC" id="VGNC:98041">
    <property type="gene designation" value="ID2"/>
</dbReference>
<dbReference type="eggNOG" id="ENOG502RZP5">
    <property type="taxonomic scope" value="Eukaryota"/>
</dbReference>
<dbReference type="GeneTree" id="ENSGT00940000156464"/>
<dbReference type="HOGENOM" id="CLU_116790_2_1_1"/>
<dbReference type="InParanoid" id="Q2VIU1"/>
<dbReference type="OMA" id="FPTELMT"/>
<dbReference type="OrthoDB" id="10047910at2759"/>
<dbReference type="TreeFam" id="TF326217"/>
<dbReference type="ChiTaRS" id="ID2">
    <property type="organism name" value="pig"/>
</dbReference>
<dbReference type="Proteomes" id="UP000008227">
    <property type="component" value="Chromosome 3"/>
</dbReference>
<dbReference type="Proteomes" id="UP000314985">
    <property type="component" value="Chromosome 3"/>
</dbReference>
<dbReference type="Proteomes" id="UP000694570">
    <property type="component" value="Unplaced"/>
</dbReference>
<dbReference type="Proteomes" id="UP000694571">
    <property type="component" value="Unplaced"/>
</dbReference>
<dbReference type="Proteomes" id="UP000694720">
    <property type="component" value="Unplaced"/>
</dbReference>
<dbReference type="Proteomes" id="UP000694722">
    <property type="component" value="Unplaced"/>
</dbReference>
<dbReference type="Proteomes" id="UP000694723">
    <property type="component" value="Unplaced"/>
</dbReference>
<dbReference type="Proteomes" id="UP000694724">
    <property type="component" value="Unplaced"/>
</dbReference>
<dbReference type="Proteomes" id="UP000694725">
    <property type="component" value="Unplaced"/>
</dbReference>
<dbReference type="Proteomes" id="UP000694726">
    <property type="component" value="Unplaced"/>
</dbReference>
<dbReference type="Proteomes" id="UP000694727">
    <property type="component" value="Unplaced"/>
</dbReference>
<dbReference type="Proteomes" id="UP000694728">
    <property type="component" value="Unplaced"/>
</dbReference>
<dbReference type="Bgee" id="ENSSSCG00000008645">
    <property type="expression patterns" value="Expressed in granulosa cell and 45 other cell types or tissues"/>
</dbReference>
<dbReference type="ExpressionAtlas" id="Q2VIU1">
    <property type="expression patterns" value="baseline and differential"/>
</dbReference>
<dbReference type="GO" id="GO:0005737">
    <property type="term" value="C:cytoplasm"/>
    <property type="evidence" value="ECO:0000250"/>
    <property type="project" value="UniProtKB"/>
</dbReference>
<dbReference type="GO" id="GO:0005829">
    <property type="term" value="C:cytosol"/>
    <property type="evidence" value="ECO:0007669"/>
    <property type="project" value="Ensembl"/>
</dbReference>
<dbReference type="GO" id="GO:0000791">
    <property type="term" value="C:euchromatin"/>
    <property type="evidence" value="ECO:0007669"/>
    <property type="project" value="Ensembl"/>
</dbReference>
<dbReference type="GO" id="GO:0005634">
    <property type="term" value="C:nucleus"/>
    <property type="evidence" value="ECO:0000318"/>
    <property type="project" value="GO_Central"/>
</dbReference>
<dbReference type="GO" id="GO:0032991">
    <property type="term" value="C:protein-containing complex"/>
    <property type="evidence" value="ECO:0000250"/>
    <property type="project" value="UniProtKB"/>
</dbReference>
<dbReference type="GO" id="GO:0046983">
    <property type="term" value="F:protein dimerization activity"/>
    <property type="evidence" value="ECO:0007669"/>
    <property type="project" value="InterPro"/>
</dbReference>
<dbReference type="GO" id="GO:0061629">
    <property type="term" value="F:RNA polymerase II-specific DNA-binding transcription factor binding"/>
    <property type="evidence" value="ECO:0007669"/>
    <property type="project" value="Ensembl"/>
</dbReference>
<dbReference type="GO" id="GO:0003714">
    <property type="term" value="F:transcription corepressor activity"/>
    <property type="evidence" value="ECO:0000318"/>
    <property type="project" value="GO_Central"/>
</dbReference>
<dbReference type="GO" id="GO:0140416">
    <property type="term" value="F:transcription regulator inhibitor activity"/>
    <property type="evidence" value="ECO:0007669"/>
    <property type="project" value="Ensembl"/>
</dbReference>
<dbReference type="GO" id="GO:0044325">
    <property type="term" value="F:transmembrane transporter binding"/>
    <property type="evidence" value="ECO:0007669"/>
    <property type="project" value="Ensembl"/>
</dbReference>
<dbReference type="GO" id="GO:0060612">
    <property type="term" value="P:adipose tissue development"/>
    <property type="evidence" value="ECO:0007669"/>
    <property type="project" value="Ensembl"/>
</dbReference>
<dbReference type="GO" id="GO:0008344">
    <property type="term" value="P:adult locomotory behavior"/>
    <property type="evidence" value="ECO:0007669"/>
    <property type="project" value="Ensembl"/>
</dbReference>
<dbReference type="GO" id="GO:0048708">
    <property type="term" value="P:astrocyte differentiation"/>
    <property type="evidence" value="ECO:0007669"/>
    <property type="project" value="Ensembl"/>
</dbReference>
<dbReference type="GO" id="GO:0030183">
    <property type="term" value="P:B cell differentiation"/>
    <property type="evidence" value="ECO:0007669"/>
    <property type="project" value="Ensembl"/>
</dbReference>
<dbReference type="GO" id="GO:0003166">
    <property type="term" value="P:bundle of His development"/>
    <property type="evidence" value="ECO:0007669"/>
    <property type="project" value="Ensembl"/>
</dbReference>
<dbReference type="GO" id="GO:0048469">
    <property type="term" value="P:cell maturation"/>
    <property type="evidence" value="ECO:0007669"/>
    <property type="project" value="Ensembl"/>
</dbReference>
<dbReference type="GO" id="GO:0048667">
    <property type="term" value="P:cell morphogenesis involved in neuron differentiation"/>
    <property type="evidence" value="ECO:0007669"/>
    <property type="project" value="Ensembl"/>
</dbReference>
<dbReference type="GO" id="GO:0071285">
    <property type="term" value="P:cellular response to lithium ion"/>
    <property type="evidence" value="ECO:0007669"/>
    <property type="project" value="Ensembl"/>
</dbReference>
<dbReference type="GO" id="GO:0090398">
    <property type="term" value="P:cellular senescence"/>
    <property type="evidence" value="ECO:0000250"/>
    <property type="project" value="UniProtKB"/>
</dbReference>
<dbReference type="GO" id="GO:0032922">
    <property type="term" value="P:circadian regulation of gene expression"/>
    <property type="evidence" value="ECO:0000250"/>
    <property type="project" value="UniProtKB"/>
</dbReference>
<dbReference type="GO" id="GO:0071542">
    <property type="term" value="P:dopaminergic neuron differentiation"/>
    <property type="evidence" value="ECO:0007669"/>
    <property type="project" value="Ensembl"/>
</dbReference>
<dbReference type="GO" id="GO:0048557">
    <property type="term" value="P:embryonic digestive tract morphogenesis"/>
    <property type="evidence" value="ECO:0000250"/>
    <property type="project" value="UniProtKB"/>
</dbReference>
<dbReference type="GO" id="GO:0061031">
    <property type="term" value="P:endodermal digestive tract morphogenesis"/>
    <property type="evidence" value="ECO:0000250"/>
    <property type="project" value="UniProtKB"/>
</dbReference>
<dbReference type="GO" id="GO:0043153">
    <property type="term" value="P:entrainment of circadian clock by photoperiod"/>
    <property type="evidence" value="ECO:0000250"/>
    <property type="project" value="UniProtKB"/>
</dbReference>
<dbReference type="GO" id="GO:0043353">
    <property type="term" value="P:enucleate erythrocyte differentiation"/>
    <property type="evidence" value="ECO:0007669"/>
    <property type="project" value="Ensembl"/>
</dbReference>
<dbReference type="GO" id="GO:0061030">
    <property type="term" value="P:epithelial cell differentiation involved in mammary gland alveolus development"/>
    <property type="evidence" value="ECO:0000250"/>
    <property type="project" value="UniProtKB"/>
</dbReference>
<dbReference type="GO" id="GO:0045475">
    <property type="term" value="P:locomotor rhythm"/>
    <property type="evidence" value="ECO:0000250"/>
    <property type="project" value="UniProtKB"/>
</dbReference>
<dbReference type="GO" id="GO:0060749">
    <property type="term" value="P:mammary gland alveolus development"/>
    <property type="evidence" value="ECO:0000250"/>
    <property type="project" value="UniProtKB"/>
</dbReference>
<dbReference type="GO" id="GO:0033598">
    <property type="term" value="P:mammary gland epithelial cell proliferation"/>
    <property type="evidence" value="ECO:0000250"/>
    <property type="project" value="UniProtKB"/>
</dbReference>
<dbReference type="GO" id="GO:0003149">
    <property type="term" value="P:membranous septum morphogenesis"/>
    <property type="evidence" value="ECO:0007669"/>
    <property type="project" value="Ensembl"/>
</dbReference>
<dbReference type="GO" id="GO:0001656">
    <property type="term" value="P:metanephros development"/>
    <property type="evidence" value="ECO:0007669"/>
    <property type="project" value="Ensembl"/>
</dbReference>
<dbReference type="GO" id="GO:0001779">
    <property type="term" value="P:natural killer cell differentiation"/>
    <property type="evidence" value="ECO:0007669"/>
    <property type="project" value="Ensembl"/>
</dbReference>
<dbReference type="GO" id="GO:0045578">
    <property type="term" value="P:negative regulation of B cell differentiation"/>
    <property type="evidence" value="ECO:0007669"/>
    <property type="project" value="Ensembl"/>
</dbReference>
<dbReference type="GO" id="GO:1904339">
    <property type="term" value="P:negative regulation of dopaminergic neuron differentiation"/>
    <property type="evidence" value="ECO:0007669"/>
    <property type="project" value="Ensembl"/>
</dbReference>
<dbReference type="GO" id="GO:0010629">
    <property type="term" value="P:negative regulation of gene expression"/>
    <property type="evidence" value="ECO:0000250"/>
    <property type="project" value="UniProtKB"/>
</dbReference>
<dbReference type="GO" id="GO:0051148">
    <property type="term" value="P:negative regulation of muscle cell differentiation"/>
    <property type="evidence" value="ECO:0007669"/>
    <property type="project" value="Ensembl"/>
</dbReference>
<dbReference type="GO" id="GO:0048715">
    <property type="term" value="P:negative regulation of oligodendrocyte differentiation"/>
    <property type="evidence" value="ECO:0007669"/>
    <property type="project" value="Ensembl"/>
</dbReference>
<dbReference type="GO" id="GO:0045668">
    <property type="term" value="P:negative regulation of osteoblast differentiation"/>
    <property type="evidence" value="ECO:0007669"/>
    <property type="project" value="Ensembl"/>
</dbReference>
<dbReference type="GO" id="GO:0000122">
    <property type="term" value="P:negative regulation of transcription by RNA polymerase II"/>
    <property type="evidence" value="ECO:0000318"/>
    <property type="project" value="GO_Central"/>
</dbReference>
<dbReference type="GO" id="GO:0030182">
    <property type="term" value="P:neuron differentiation"/>
    <property type="evidence" value="ECO:0000318"/>
    <property type="project" value="GO_Central"/>
</dbReference>
<dbReference type="GO" id="GO:0048663">
    <property type="term" value="P:neuron fate commitment"/>
    <property type="evidence" value="ECO:0000250"/>
    <property type="project" value="UniProtKB"/>
</dbReference>
<dbReference type="GO" id="GO:0021772">
    <property type="term" value="P:olfactory bulb development"/>
    <property type="evidence" value="ECO:0007669"/>
    <property type="project" value="Ensembl"/>
</dbReference>
<dbReference type="GO" id="GO:0014003">
    <property type="term" value="P:oligodendrocyte development"/>
    <property type="evidence" value="ECO:0007669"/>
    <property type="project" value="Ensembl"/>
</dbReference>
<dbReference type="GO" id="GO:0048541">
    <property type="term" value="P:Peyer's patch development"/>
    <property type="evidence" value="ECO:0007669"/>
    <property type="project" value="Ensembl"/>
</dbReference>
<dbReference type="GO" id="GO:0048711">
    <property type="term" value="P:positive regulation of astrocyte differentiation"/>
    <property type="evidence" value="ECO:0007669"/>
    <property type="project" value="Ensembl"/>
</dbReference>
<dbReference type="GO" id="GO:0045777">
    <property type="term" value="P:positive regulation of blood pressure"/>
    <property type="evidence" value="ECO:0000250"/>
    <property type="project" value="UniProtKB"/>
</dbReference>
<dbReference type="GO" id="GO:0045893">
    <property type="term" value="P:positive regulation of DNA-templated transcription"/>
    <property type="evidence" value="ECO:0000250"/>
    <property type="project" value="UniProtKB"/>
</dbReference>
<dbReference type="GO" id="GO:0045648">
    <property type="term" value="P:positive regulation of erythrocyte differentiation"/>
    <property type="evidence" value="ECO:0007669"/>
    <property type="project" value="Ensembl"/>
</dbReference>
<dbReference type="GO" id="GO:0045600">
    <property type="term" value="P:positive regulation of fat cell differentiation"/>
    <property type="evidence" value="ECO:0007669"/>
    <property type="project" value="Ensembl"/>
</dbReference>
<dbReference type="GO" id="GO:0010628">
    <property type="term" value="P:positive regulation of gene expression"/>
    <property type="evidence" value="ECO:0000250"/>
    <property type="project" value="UniProtKB"/>
</dbReference>
<dbReference type="GO" id="GO:0045651">
    <property type="term" value="P:positive regulation of macrophage differentiation"/>
    <property type="evidence" value="ECO:0007669"/>
    <property type="project" value="Ensembl"/>
</dbReference>
<dbReference type="GO" id="GO:0048661">
    <property type="term" value="P:positive regulation of smooth muscle cell proliferation"/>
    <property type="evidence" value="ECO:0000250"/>
    <property type="project" value="UniProtKB"/>
</dbReference>
<dbReference type="GO" id="GO:0042752">
    <property type="term" value="P:regulation of circadian rhythm"/>
    <property type="evidence" value="ECO:0000250"/>
    <property type="project" value="UniProtKB"/>
</dbReference>
<dbReference type="GO" id="GO:2000045">
    <property type="term" value="P:regulation of G1/S transition of mitotic cell cycle"/>
    <property type="evidence" value="ECO:0007669"/>
    <property type="project" value="Ensembl"/>
</dbReference>
<dbReference type="GO" id="GO:0010468">
    <property type="term" value="P:regulation of gene expression"/>
    <property type="evidence" value="ECO:0000250"/>
    <property type="project" value="UniProtKB"/>
</dbReference>
<dbReference type="GO" id="GO:0019216">
    <property type="term" value="P:regulation of lipid metabolic process"/>
    <property type="evidence" value="ECO:0000250"/>
    <property type="project" value="UniProtKB"/>
</dbReference>
<dbReference type="GO" id="GO:2000177">
    <property type="term" value="P:regulation of neural precursor cell proliferation"/>
    <property type="evidence" value="ECO:0000250"/>
    <property type="project" value="UniProtKB"/>
</dbReference>
<dbReference type="GO" id="GO:0045664">
    <property type="term" value="P:regulation of neuron differentiation"/>
    <property type="evidence" value="ECO:0000250"/>
    <property type="project" value="UniProtKB"/>
</dbReference>
<dbReference type="GO" id="GO:0001966">
    <property type="term" value="P:thigmotaxis"/>
    <property type="evidence" value="ECO:0007669"/>
    <property type="project" value="Ensembl"/>
</dbReference>
<dbReference type="GO" id="GO:0050872">
    <property type="term" value="P:white fat cell differentiation"/>
    <property type="evidence" value="ECO:0007669"/>
    <property type="project" value="Ensembl"/>
</dbReference>
<dbReference type="CDD" id="cd19692">
    <property type="entry name" value="bHLH_dnHLH_ID2"/>
    <property type="match status" value="1"/>
</dbReference>
<dbReference type="FunFam" id="4.10.280.10:FF:000055">
    <property type="entry name" value="DNA-binding protein inhibitor ID-2"/>
    <property type="match status" value="1"/>
</dbReference>
<dbReference type="Gene3D" id="4.10.280.10">
    <property type="entry name" value="Helix-loop-helix DNA-binding domain"/>
    <property type="match status" value="1"/>
</dbReference>
<dbReference type="InterPro" id="IPR011598">
    <property type="entry name" value="bHLH_dom"/>
</dbReference>
<dbReference type="InterPro" id="IPR026052">
    <property type="entry name" value="DNA-bd_prot-inh"/>
</dbReference>
<dbReference type="InterPro" id="IPR036638">
    <property type="entry name" value="HLH_DNA-bd_sf"/>
</dbReference>
<dbReference type="PANTHER" id="PTHR11723">
    <property type="entry name" value="DNA-BINDING PROTEIN INHIBITOR"/>
    <property type="match status" value="1"/>
</dbReference>
<dbReference type="PANTHER" id="PTHR11723:SF5">
    <property type="entry name" value="DNA-BINDING PROTEIN INHIBITOR ID-2"/>
    <property type="match status" value="1"/>
</dbReference>
<dbReference type="Pfam" id="PF00010">
    <property type="entry name" value="HLH"/>
    <property type="match status" value="1"/>
</dbReference>
<dbReference type="SMART" id="SM00353">
    <property type="entry name" value="HLH"/>
    <property type="match status" value="1"/>
</dbReference>
<dbReference type="SUPFAM" id="SSF47459">
    <property type="entry name" value="HLH, helix-loop-helix DNA-binding domain"/>
    <property type="match status" value="1"/>
</dbReference>
<dbReference type="PROSITE" id="PS50888">
    <property type="entry name" value="BHLH"/>
    <property type="match status" value="1"/>
</dbReference>
<protein>
    <recommendedName>
        <fullName>DNA-binding protein inhibitor ID-2</fullName>
    </recommendedName>
    <alternativeName>
        <fullName>Inhibitor of DNA binding 2</fullName>
    </alternativeName>
    <alternativeName>
        <fullName>Inhibitor of differentiation 2</fullName>
    </alternativeName>
</protein>
<proteinExistence type="evidence at transcript level"/>
<comment type="function">
    <text evidence="1">Transcriptional regulator (lacking a basic DNA binding domain) which negatively regulates the basic helix-loop-helix (bHLH) transcription factors by forming heterodimers and inhibiting their DNA binding and transcriptional activity. Implicated in regulating a variety of cellular processes, including cellular growth, senescence, differentiation, apoptosis, angiogenesis, and neoplastic transformation. Inhibits skeletal muscle and cardiac myocyte differentiation. Regulates the circadian clock by repressing the transcriptional activator activity of the CLOCK-BMAL1 heterodimer. Restricts the CLOCK and BMAL1 localization to the cytoplasm. Plays a role in both the input and output pathways of the circadian clock: in the input component, is involved in modulating the magnitude of photic entrainment and in the output component, contributes to the regulation of a variety of liver clock-controlled genes involved in lipid metabolism (By similarity).</text>
</comment>
<comment type="subunit">
    <text evidence="2 4">Interacts with GATA4 and NKX2-5 (By similarity). Interacts with NR0B2. Interacts with CLOCK and BMAL1 (By similarity). Interacts with IFI204 (By similarity). Interacts with NEDD9/HEF1. Interacts with ASB4; this interaction promotes ID2 proteasomal degradation (By similarity).</text>
</comment>
<comment type="subcellular location">
    <subcellularLocation>
        <location evidence="2">Cytoplasm</location>
    </subcellularLocation>
    <subcellularLocation>
        <location evidence="2">Nucleus</location>
    </subcellularLocation>
</comment>
<comment type="domain">
    <text evidence="1">The bHLH domain is essential for its repressor activity towards the CLOCK-BMAL1 heterodimer.</text>
</comment>
<comment type="PTM">
    <text evidence="4">Ubiquitinated in a ASB4-depedent manner, leading to proteasomal degradation.</text>
</comment>
<comment type="PTM">
    <text evidence="3">Phosphorylated in vitro by CDK1, PKA and PKC.</text>
</comment>
<accession>Q2VIU1</accession>
<reference key="1">
    <citation type="submission" date="2005-07" db="EMBL/GenBank/DDBJ databases">
        <title>Identification and characterization of DEGs (Differentially Expressed Genes) in porcine placenta.</title>
        <authorList>
            <person name="Lee S.Y."/>
            <person name="Hwang K.C."/>
            <person name="Kim J.H."/>
        </authorList>
    </citation>
    <scope>NUCLEOTIDE SEQUENCE [MRNA]</scope>
    <source>
        <tissue>Placenta</tissue>
    </source>
</reference>
<organism>
    <name type="scientific">Sus scrofa</name>
    <name type="common">Pig</name>
    <dbReference type="NCBI Taxonomy" id="9823"/>
    <lineage>
        <taxon>Eukaryota</taxon>
        <taxon>Metazoa</taxon>
        <taxon>Chordata</taxon>
        <taxon>Craniata</taxon>
        <taxon>Vertebrata</taxon>
        <taxon>Euteleostomi</taxon>
        <taxon>Mammalia</taxon>
        <taxon>Eutheria</taxon>
        <taxon>Laurasiatheria</taxon>
        <taxon>Artiodactyla</taxon>
        <taxon>Suina</taxon>
        <taxon>Suidae</taxon>
        <taxon>Sus</taxon>
    </lineage>
</organism>
<sequence>MKAFSPVRSVRKNSLSDHSLGISRSKTPVDDPMSLLYNMNDCYSKLKELVPSIPQNKKVSKMEILQHVIDYILDLQIALDSHPTIVSLHHQRPGQSQASRTPLTTLNTDISILSLQASEFPSELMSSDSKALCG</sequence>
<keyword id="KW-0090">Biological rhythms</keyword>
<keyword id="KW-0963">Cytoplasm</keyword>
<keyword id="KW-0217">Developmental protein</keyword>
<keyword id="KW-0539">Nucleus</keyword>
<keyword id="KW-0597">Phosphoprotein</keyword>
<keyword id="KW-1185">Reference proteome</keyword>
<keyword id="KW-0678">Repressor</keyword>
<keyword id="KW-0804">Transcription</keyword>
<keyword id="KW-0805">Transcription regulation</keyword>
<keyword id="KW-0832">Ubl conjugation</keyword>
<evidence type="ECO:0000250" key="1"/>
<evidence type="ECO:0000250" key="2">
    <source>
        <dbReference type="UniProtKB" id="P41136"/>
    </source>
</evidence>
<evidence type="ECO:0000250" key="3">
    <source>
        <dbReference type="UniProtKB" id="P41137"/>
    </source>
</evidence>
<evidence type="ECO:0000250" key="4">
    <source>
        <dbReference type="UniProtKB" id="Q02363"/>
    </source>
</evidence>
<evidence type="ECO:0000255" key="5">
    <source>
        <dbReference type="PROSITE-ProRule" id="PRU00981"/>
    </source>
</evidence>
<name>ID2_PIG</name>